<proteinExistence type="inferred from homology"/>
<keyword id="KW-1185">Reference proteome</keyword>
<keyword id="KW-0687">Ribonucleoprotein</keyword>
<keyword id="KW-0689">Ribosomal protein</keyword>
<keyword id="KW-0694">RNA-binding</keyword>
<keyword id="KW-0699">rRNA-binding</keyword>
<comment type="function">
    <text evidence="1">One of two assembly initiator proteins, it binds directly to the 5'-end of the 23S rRNA, where it nucleates assembly of the 50S subunit.</text>
</comment>
<comment type="function">
    <text evidence="1">One of the proteins that surrounds the polypeptide exit tunnel on the outside of the subunit.</text>
</comment>
<comment type="subunit">
    <text evidence="1">Part of the 50S ribosomal subunit.</text>
</comment>
<comment type="similarity">
    <text evidence="1">Belongs to the universal ribosomal protein uL24 family.</text>
</comment>
<accession>Q3A6N6</accession>
<sequence length="109" mass="11973">MAAKKMHVKKDDMVMVIAGKEKGKTGKIMRVLPGKGRVVVENLNVVKRHTRPNRVNTQGGIVEKEAPLDASNVALVCSACNKPTRTGVRVLEDGTKTRFCKKCNETLDK</sequence>
<organism>
    <name type="scientific">Syntrophotalea carbinolica (strain DSM 2380 / NBRC 103641 / GraBd1)</name>
    <name type="common">Pelobacter carbinolicus</name>
    <dbReference type="NCBI Taxonomy" id="338963"/>
    <lineage>
        <taxon>Bacteria</taxon>
        <taxon>Pseudomonadati</taxon>
        <taxon>Thermodesulfobacteriota</taxon>
        <taxon>Desulfuromonadia</taxon>
        <taxon>Desulfuromonadales</taxon>
        <taxon>Syntrophotaleaceae</taxon>
        <taxon>Syntrophotalea</taxon>
    </lineage>
</organism>
<evidence type="ECO:0000255" key="1">
    <source>
        <dbReference type="HAMAP-Rule" id="MF_01326"/>
    </source>
</evidence>
<evidence type="ECO:0000305" key="2"/>
<gene>
    <name evidence="1" type="primary">rplX</name>
    <name type="ordered locus">Pcar_0712</name>
</gene>
<reference key="1">
    <citation type="submission" date="2005-10" db="EMBL/GenBank/DDBJ databases">
        <title>Complete sequence of Pelobacter carbinolicus DSM 2380.</title>
        <authorList>
            <person name="Copeland A."/>
            <person name="Lucas S."/>
            <person name="Lapidus A."/>
            <person name="Barry K."/>
            <person name="Detter J.C."/>
            <person name="Glavina T."/>
            <person name="Hammon N."/>
            <person name="Israni S."/>
            <person name="Pitluck S."/>
            <person name="Chertkov O."/>
            <person name="Schmutz J."/>
            <person name="Larimer F."/>
            <person name="Land M."/>
            <person name="Kyrpides N."/>
            <person name="Ivanova N."/>
            <person name="Richardson P."/>
        </authorList>
    </citation>
    <scope>NUCLEOTIDE SEQUENCE [LARGE SCALE GENOMIC DNA]</scope>
    <source>
        <strain>DSM 2380 / NBRC 103641 / GraBd1</strain>
    </source>
</reference>
<feature type="chain" id="PRO_0000241634" description="Large ribosomal subunit protein uL24">
    <location>
        <begin position="1"/>
        <end position="109"/>
    </location>
</feature>
<protein>
    <recommendedName>
        <fullName evidence="1">Large ribosomal subunit protein uL24</fullName>
    </recommendedName>
    <alternativeName>
        <fullName evidence="2">50S ribosomal protein L24</fullName>
    </alternativeName>
</protein>
<name>RL24_SYNC1</name>
<dbReference type="EMBL" id="CP000142">
    <property type="protein sequence ID" value="ABA87971.1"/>
    <property type="molecule type" value="Genomic_DNA"/>
</dbReference>
<dbReference type="RefSeq" id="WP_011340414.1">
    <property type="nucleotide sequence ID" value="NC_007498.2"/>
</dbReference>
<dbReference type="SMR" id="Q3A6N6"/>
<dbReference type="STRING" id="338963.Pcar_0712"/>
<dbReference type="KEGG" id="pca:Pcar_0712"/>
<dbReference type="eggNOG" id="COG0198">
    <property type="taxonomic scope" value="Bacteria"/>
</dbReference>
<dbReference type="HOGENOM" id="CLU_093315_2_3_7"/>
<dbReference type="Proteomes" id="UP000002534">
    <property type="component" value="Chromosome"/>
</dbReference>
<dbReference type="GO" id="GO:1990904">
    <property type="term" value="C:ribonucleoprotein complex"/>
    <property type="evidence" value="ECO:0007669"/>
    <property type="project" value="UniProtKB-KW"/>
</dbReference>
<dbReference type="GO" id="GO:0005840">
    <property type="term" value="C:ribosome"/>
    <property type="evidence" value="ECO:0007669"/>
    <property type="project" value="UniProtKB-KW"/>
</dbReference>
<dbReference type="GO" id="GO:0019843">
    <property type="term" value="F:rRNA binding"/>
    <property type="evidence" value="ECO:0007669"/>
    <property type="project" value="UniProtKB-UniRule"/>
</dbReference>
<dbReference type="GO" id="GO:0003735">
    <property type="term" value="F:structural constituent of ribosome"/>
    <property type="evidence" value="ECO:0007669"/>
    <property type="project" value="InterPro"/>
</dbReference>
<dbReference type="GO" id="GO:0006412">
    <property type="term" value="P:translation"/>
    <property type="evidence" value="ECO:0007669"/>
    <property type="project" value="UniProtKB-UniRule"/>
</dbReference>
<dbReference type="CDD" id="cd06089">
    <property type="entry name" value="KOW_RPL26"/>
    <property type="match status" value="1"/>
</dbReference>
<dbReference type="FunFam" id="2.30.30.30:FF:000004">
    <property type="entry name" value="50S ribosomal protein L24"/>
    <property type="match status" value="1"/>
</dbReference>
<dbReference type="Gene3D" id="2.30.30.30">
    <property type="match status" value="1"/>
</dbReference>
<dbReference type="HAMAP" id="MF_01326_B">
    <property type="entry name" value="Ribosomal_uL24_B"/>
    <property type="match status" value="1"/>
</dbReference>
<dbReference type="InterPro" id="IPR005824">
    <property type="entry name" value="KOW"/>
</dbReference>
<dbReference type="InterPro" id="IPR014722">
    <property type="entry name" value="Rib_uL2_dom2"/>
</dbReference>
<dbReference type="InterPro" id="IPR003256">
    <property type="entry name" value="Ribosomal_uL24"/>
</dbReference>
<dbReference type="InterPro" id="IPR005825">
    <property type="entry name" value="Ribosomal_uL24_CS"/>
</dbReference>
<dbReference type="InterPro" id="IPR041988">
    <property type="entry name" value="Ribosomal_uL24_KOW"/>
</dbReference>
<dbReference type="InterPro" id="IPR008991">
    <property type="entry name" value="Translation_prot_SH3-like_sf"/>
</dbReference>
<dbReference type="NCBIfam" id="TIGR01079">
    <property type="entry name" value="rplX_bact"/>
    <property type="match status" value="1"/>
</dbReference>
<dbReference type="PANTHER" id="PTHR12903">
    <property type="entry name" value="MITOCHONDRIAL RIBOSOMAL PROTEIN L24"/>
    <property type="match status" value="1"/>
</dbReference>
<dbReference type="Pfam" id="PF00467">
    <property type="entry name" value="KOW"/>
    <property type="match status" value="1"/>
</dbReference>
<dbReference type="Pfam" id="PF17136">
    <property type="entry name" value="ribosomal_L24"/>
    <property type="match status" value="1"/>
</dbReference>
<dbReference type="SMART" id="SM00739">
    <property type="entry name" value="KOW"/>
    <property type="match status" value="1"/>
</dbReference>
<dbReference type="SUPFAM" id="SSF50104">
    <property type="entry name" value="Translation proteins SH3-like domain"/>
    <property type="match status" value="1"/>
</dbReference>
<dbReference type="PROSITE" id="PS01108">
    <property type="entry name" value="RIBOSOMAL_L24"/>
    <property type="match status" value="1"/>
</dbReference>